<organism>
    <name type="scientific">Oryza sativa subsp. indica</name>
    <name type="common">Rice</name>
    <dbReference type="NCBI Taxonomy" id="39946"/>
    <lineage>
        <taxon>Eukaryota</taxon>
        <taxon>Viridiplantae</taxon>
        <taxon>Streptophyta</taxon>
        <taxon>Embryophyta</taxon>
        <taxon>Tracheophyta</taxon>
        <taxon>Spermatophyta</taxon>
        <taxon>Magnoliopsida</taxon>
        <taxon>Liliopsida</taxon>
        <taxon>Poales</taxon>
        <taxon>Poaceae</taxon>
        <taxon>BOP clade</taxon>
        <taxon>Oryzoideae</taxon>
        <taxon>Oryzeae</taxon>
        <taxon>Oryzinae</taxon>
        <taxon>Oryza</taxon>
        <taxon>Oryza sativa</taxon>
    </lineage>
</organism>
<feature type="chain" id="PRO_0000306906" description="Putative UPF0496 protein 2">
    <location>
        <begin position="1"/>
        <end position="408"/>
    </location>
</feature>
<feature type="transmembrane region" description="Helical" evidence="1">
    <location>
        <begin position="224"/>
        <end position="244"/>
    </location>
</feature>
<feature type="transmembrane region" description="Helical" evidence="1">
    <location>
        <begin position="252"/>
        <end position="272"/>
    </location>
</feature>
<feature type="region of interest" description="Disordered" evidence="2">
    <location>
        <begin position="385"/>
        <end position="408"/>
    </location>
</feature>
<name>U496B_ORYSI</name>
<evidence type="ECO:0000255" key="1"/>
<evidence type="ECO:0000256" key="2">
    <source>
        <dbReference type="SAM" id="MobiDB-lite"/>
    </source>
</evidence>
<evidence type="ECO:0000305" key="3"/>
<accession>A2YH25</accession>
<protein>
    <recommendedName>
        <fullName>Putative UPF0496 protein 2</fullName>
    </recommendedName>
</protein>
<sequence>MIERSNSTPSATPVRPPLAVDEEYNQAFRSKSFLDLWSHAHHHLTHTFSSFKLSTSTPCAGRGGAREDDFLHAGGDGGAADDSEQSCSYTVLDDFVLEPSPESLARGARLQQRRRRRPRRHRVETLLIEYFDVTEEACEACSALLAAIGAARRHHLTLRRLLLRLDGGDDDDAKDALARHVRLDNPLSPGSLSEFHDVHARCSPLASRLAAAQRRLRRLARALRIARGTAAAALVGACAAAIVAAVVLAAHALVGIGVAAAAFGATPAGAARWWARRAAEKVSSRHYARAGATLDAAARGAYIVGRDLDTVSRMVRRAHDELEHGRDVARIAMRGHGERPLLQEVAREEEECEEDLRAQLAELEEHVCLCLITINRTRRLVAHEMARGLPPPSPATVTTTSEERLTSS</sequence>
<proteinExistence type="inferred from homology"/>
<comment type="subcellular location">
    <subcellularLocation>
        <location evidence="3">Membrane</location>
        <topology evidence="3">Multi-pass membrane protein</topology>
    </subcellularLocation>
</comment>
<comment type="similarity">
    <text evidence="3">Belongs to the UPF0496 family.</text>
</comment>
<comment type="sequence caution" evidence="3">
    <conflict type="frameshift">
        <sequence resource="EMBL-CDS" id="EAZ02386"/>
    </conflict>
</comment>
<gene>
    <name type="ORF">OsI_023618</name>
</gene>
<dbReference type="EMBL" id="CM000131">
    <property type="protein sequence ID" value="EAZ02386.1"/>
    <property type="status" value="ALT_FRAME"/>
    <property type="molecule type" value="Genomic_DNA"/>
</dbReference>
<dbReference type="STRING" id="39946.A2YH25"/>
<dbReference type="Proteomes" id="UP000007015">
    <property type="component" value="Chromosome 6"/>
</dbReference>
<dbReference type="GO" id="GO:0016020">
    <property type="term" value="C:membrane"/>
    <property type="evidence" value="ECO:0007669"/>
    <property type="project" value="UniProtKB-SubCell"/>
</dbReference>
<dbReference type="InterPro" id="IPR007749">
    <property type="entry name" value="DUF677"/>
</dbReference>
<dbReference type="PANTHER" id="PTHR31113:SF20">
    <property type="entry name" value="UPF0496 PROTEIN 2-RELATED"/>
    <property type="match status" value="1"/>
</dbReference>
<dbReference type="PANTHER" id="PTHR31113">
    <property type="entry name" value="UPF0496 PROTEIN 3-RELATED"/>
    <property type="match status" value="1"/>
</dbReference>
<dbReference type="Pfam" id="PF05055">
    <property type="entry name" value="DUF677"/>
    <property type="match status" value="1"/>
</dbReference>
<reference key="1">
    <citation type="journal article" date="2005" name="PLoS Biol.">
        <title>The genomes of Oryza sativa: a history of duplications.</title>
        <authorList>
            <person name="Yu J."/>
            <person name="Wang J."/>
            <person name="Lin W."/>
            <person name="Li S."/>
            <person name="Li H."/>
            <person name="Zhou J."/>
            <person name="Ni P."/>
            <person name="Dong W."/>
            <person name="Hu S."/>
            <person name="Zeng C."/>
            <person name="Zhang J."/>
            <person name="Zhang Y."/>
            <person name="Li R."/>
            <person name="Xu Z."/>
            <person name="Li S."/>
            <person name="Li X."/>
            <person name="Zheng H."/>
            <person name="Cong L."/>
            <person name="Lin L."/>
            <person name="Yin J."/>
            <person name="Geng J."/>
            <person name="Li G."/>
            <person name="Shi J."/>
            <person name="Liu J."/>
            <person name="Lv H."/>
            <person name="Li J."/>
            <person name="Wang J."/>
            <person name="Deng Y."/>
            <person name="Ran L."/>
            <person name="Shi X."/>
            <person name="Wang X."/>
            <person name="Wu Q."/>
            <person name="Li C."/>
            <person name="Ren X."/>
            <person name="Wang J."/>
            <person name="Wang X."/>
            <person name="Li D."/>
            <person name="Liu D."/>
            <person name="Zhang X."/>
            <person name="Ji Z."/>
            <person name="Zhao W."/>
            <person name="Sun Y."/>
            <person name="Zhang Z."/>
            <person name="Bao J."/>
            <person name="Han Y."/>
            <person name="Dong L."/>
            <person name="Ji J."/>
            <person name="Chen P."/>
            <person name="Wu S."/>
            <person name="Liu J."/>
            <person name="Xiao Y."/>
            <person name="Bu D."/>
            <person name="Tan J."/>
            <person name="Yang L."/>
            <person name="Ye C."/>
            <person name="Zhang J."/>
            <person name="Xu J."/>
            <person name="Zhou Y."/>
            <person name="Yu Y."/>
            <person name="Zhang B."/>
            <person name="Zhuang S."/>
            <person name="Wei H."/>
            <person name="Liu B."/>
            <person name="Lei M."/>
            <person name="Yu H."/>
            <person name="Li Y."/>
            <person name="Xu H."/>
            <person name="Wei S."/>
            <person name="He X."/>
            <person name="Fang L."/>
            <person name="Zhang Z."/>
            <person name="Zhang Y."/>
            <person name="Huang X."/>
            <person name="Su Z."/>
            <person name="Tong W."/>
            <person name="Li J."/>
            <person name="Tong Z."/>
            <person name="Li S."/>
            <person name="Ye J."/>
            <person name="Wang L."/>
            <person name="Fang L."/>
            <person name="Lei T."/>
            <person name="Chen C.-S."/>
            <person name="Chen H.-C."/>
            <person name="Xu Z."/>
            <person name="Li H."/>
            <person name="Huang H."/>
            <person name="Zhang F."/>
            <person name="Xu H."/>
            <person name="Li N."/>
            <person name="Zhao C."/>
            <person name="Li S."/>
            <person name="Dong L."/>
            <person name="Huang Y."/>
            <person name="Li L."/>
            <person name="Xi Y."/>
            <person name="Qi Q."/>
            <person name="Li W."/>
            <person name="Zhang B."/>
            <person name="Hu W."/>
            <person name="Zhang Y."/>
            <person name="Tian X."/>
            <person name="Jiao Y."/>
            <person name="Liang X."/>
            <person name="Jin J."/>
            <person name="Gao L."/>
            <person name="Zheng W."/>
            <person name="Hao B."/>
            <person name="Liu S.-M."/>
            <person name="Wang W."/>
            <person name="Yuan L."/>
            <person name="Cao M."/>
            <person name="McDermott J."/>
            <person name="Samudrala R."/>
            <person name="Wang J."/>
            <person name="Wong G.K.-S."/>
            <person name="Yang H."/>
        </authorList>
    </citation>
    <scope>NUCLEOTIDE SEQUENCE [LARGE SCALE GENOMIC DNA]</scope>
    <source>
        <strain>cv. 93-11</strain>
    </source>
</reference>
<keyword id="KW-0472">Membrane</keyword>
<keyword id="KW-1185">Reference proteome</keyword>
<keyword id="KW-0812">Transmembrane</keyword>
<keyword id="KW-1133">Transmembrane helix</keyword>